<name>NU3C_MESVI</name>
<accession>Q9MUQ9</accession>
<comment type="function">
    <text evidence="1">NDH shuttles electrons from NAD(P)H:plastoquinone, via FMN and iron-sulfur (Fe-S) centers, to quinones in the photosynthetic chain and possibly in a chloroplast respiratory chain. The immediate electron acceptor for the enzyme in this species is believed to be plastoquinone. Couples the redox reaction to proton translocation, and thus conserves the redox energy in a proton gradient.</text>
</comment>
<comment type="catalytic activity">
    <reaction evidence="1">
        <text>a plastoquinone + NADH + (n+1) H(+)(in) = a plastoquinol + NAD(+) + n H(+)(out)</text>
        <dbReference type="Rhea" id="RHEA:42608"/>
        <dbReference type="Rhea" id="RHEA-COMP:9561"/>
        <dbReference type="Rhea" id="RHEA-COMP:9562"/>
        <dbReference type="ChEBI" id="CHEBI:15378"/>
        <dbReference type="ChEBI" id="CHEBI:17757"/>
        <dbReference type="ChEBI" id="CHEBI:57540"/>
        <dbReference type="ChEBI" id="CHEBI:57945"/>
        <dbReference type="ChEBI" id="CHEBI:62192"/>
    </reaction>
</comment>
<comment type="catalytic activity">
    <reaction evidence="1">
        <text>a plastoquinone + NADPH + (n+1) H(+)(in) = a plastoquinol + NADP(+) + n H(+)(out)</text>
        <dbReference type="Rhea" id="RHEA:42612"/>
        <dbReference type="Rhea" id="RHEA-COMP:9561"/>
        <dbReference type="Rhea" id="RHEA-COMP:9562"/>
        <dbReference type="ChEBI" id="CHEBI:15378"/>
        <dbReference type="ChEBI" id="CHEBI:17757"/>
        <dbReference type="ChEBI" id="CHEBI:57783"/>
        <dbReference type="ChEBI" id="CHEBI:58349"/>
        <dbReference type="ChEBI" id="CHEBI:62192"/>
    </reaction>
</comment>
<comment type="subunit">
    <text evidence="1">NDH is composed of at least 16 different subunits, 5 of which are encoded in the nucleus.</text>
</comment>
<comment type="subcellular location">
    <subcellularLocation>
        <location evidence="1">Plastid</location>
        <location evidence="1">Chloroplast thylakoid membrane</location>
        <topology evidence="1">Multi-pass membrane protein</topology>
    </subcellularLocation>
</comment>
<comment type="similarity">
    <text evidence="1">Belongs to the complex I subunit 3 family.</text>
</comment>
<dbReference type="EC" id="7.1.1.-" evidence="1"/>
<dbReference type="EMBL" id="AF166114">
    <property type="protein sequence ID" value="AAF43841.1"/>
    <property type="molecule type" value="Genomic_DNA"/>
</dbReference>
<dbReference type="RefSeq" id="NP_038401.1">
    <property type="nucleotide sequence ID" value="NC_002186.1"/>
</dbReference>
<dbReference type="SMR" id="Q9MUQ9"/>
<dbReference type="GeneID" id="800890"/>
<dbReference type="GO" id="GO:0009535">
    <property type="term" value="C:chloroplast thylakoid membrane"/>
    <property type="evidence" value="ECO:0007669"/>
    <property type="project" value="UniProtKB-SubCell"/>
</dbReference>
<dbReference type="GO" id="GO:0030964">
    <property type="term" value="C:NADH dehydrogenase complex"/>
    <property type="evidence" value="ECO:0007669"/>
    <property type="project" value="TreeGrafter"/>
</dbReference>
<dbReference type="GO" id="GO:0008137">
    <property type="term" value="F:NADH dehydrogenase (ubiquinone) activity"/>
    <property type="evidence" value="ECO:0007669"/>
    <property type="project" value="InterPro"/>
</dbReference>
<dbReference type="GO" id="GO:0048038">
    <property type="term" value="F:quinone binding"/>
    <property type="evidence" value="ECO:0007669"/>
    <property type="project" value="UniProtKB-KW"/>
</dbReference>
<dbReference type="GO" id="GO:0019684">
    <property type="term" value="P:photosynthesis, light reaction"/>
    <property type="evidence" value="ECO:0007669"/>
    <property type="project" value="UniProtKB-UniRule"/>
</dbReference>
<dbReference type="Gene3D" id="1.20.58.1610">
    <property type="entry name" value="NADH:ubiquinone/plastoquinone oxidoreductase, chain 3"/>
    <property type="match status" value="1"/>
</dbReference>
<dbReference type="HAMAP" id="MF_01394">
    <property type="entry name" value="NDH1_NuoA"/>
    <property type="match status" value="1"/>
</dbReference>
<dbReference type="InterPro" id="IPR023043">
    <property type="entry name" value="NAD(P)H_OxRDtase_bac/plastid"/>
</dbReference>
<dbReference type="InterPro" id="IPR000440">
    <property type="entry name" value="NADH_UbQ/plastoQ_OxRdtase_su3"/>
</dbReference>
<dbReference type="InterPro" id="IPR038430">
    <property type="entry name" value="NDAH_ubi_oxred_su3_sf"/>
</dbReference>
<dbReference type="PANTHER" id="PTHR11058">
    <property type="entry name" value="NADH-UBIQUINONE OXIDOREDUCTASE CHAIN 3"/>
    <property type="match status" value="1"/>
</dbReference>
<dbReference type="PANTHER" id="PTHR11058:SF9">
    <property type="entry name" value="NADH-UBIQUINONE OXIDOREDUCTASE CHAIN 3"/>
    <property type="match status" value="1"/>
</dbReference>
<dbReference type="Pfam" id="PF00507">
    <property type="entry name" value="Oxidored_q4"/>
    <property type="match status" value="1"/>
</dbReference>
<feature type="chain" id="PRO_0000117849" description="NAD(P)H-quinone oxidoreductase subunit 3, chloroplastic">
    <location>
        <begin position="1"/>
        <end position="120"/>
    </location>
</feature>
<feature type="transmembrane region" description="Helical" evidence="1">
    <location>
        <begin position="11"/>
        <end position="31"/>
    </location>
</feature>
<feature type="transmembrane region" description="Helical" evidence="1">
    <location>
        <begin position="65"/>
        <end position="85"/>
    </location>
</feature>
<feature type="transmembrane region" description="Helical" evidence="1">
    <location>
        <begin position="89"/>
        <end position="109"/>
    </location>
</feature>
<keyword id="KW-0150">Chloroplast</keyword>
<keyword id="KW-0472">Membrane</keyword>
<keyword id="KW-0520">NAD</keyword>
<keyword id="KW-0521">NADP</keyword>
<keyword id="KW-0934">Plastid</keyword>
<keyword id="KW-0618">Plastoquinone</keyword>
<keyword id="KW-0874">Quinone</keyword>
<keyword id="KW-0793">Thylakoid</keyword>
<keyword id="KW-1278">Translocase</keyword>
<keyword id="KW-0812">Transmembrane</keyword>
<keyword id="KW-1133">Transmembrane helix</keyword>
<keyword id="KW-0813">Transport</keyword>
<reference key="1">
    <citation type="journal article" date="2000" name="Nature">
        <title>Ancestral chloroplast genome in Mesostigma viride reveals an early branch of green plant evolution.</title>
        <authorList>
            <person name="Lemieux C."/>
            <person name="Otis C."/>
            <person name="Turmel M."/>
        </authorList>
    </citation>
    <scope>NUCLEOTIDE SEQUENCE [LARGE SCALE GENOMIC DNA]</scope>
    <source>
        <strain>NIES-296 / KY-14 / CCMP 2046</strain>
    </source>
</reference>
<sequence length="120" mass="13822">MFILEGYDSFVVFFIVACLVPILALSGSKLIRPKLSGIEKKMTYESGIEPMGEAWVQFNIRYYMFALIFVIFDVETLFLYPWAIVFKDLGITAFLETLIFLSILIIGLVYAWRKGALEWS</sequence>
<gene>
    <name evidence="1" type="primary">ndhC</name>
</gene>
<protein>
    <recommendedName>
        <fullName evidence="1">NAD(P)H-quinone oxidoreductase subunit 3, chloroplastic</fullName>
        <ecNumber evidence="1">7.1.1.-</ecNumber>
    </recommendedName>
    <alternativeName>
        <fullName evidence="1">NAD(P)H dehydrogenase subunit 3</fullName>
    </alternativeName>
    <alternativeName>
        <fullName evidence="1">NADH-plastoquinone oxidoreductase subunit 3</fullName>
    </alternativeName>
</protein>
<organism>
    <name type="scientific">Mesostigma viride</name>
    <name type="common">Green alga</name>
    <dbReference type="NCBI Taxonomy" id="41882"/>
    <lineage>
        <taxon>Eukaryota</taxon>
        <taxon>Viridiplantae</taxon>
        <taxon>Streptophyta</taxon>
        <taxon>Mesostigmatophyceae</taxon>
        <taxon>Mesostigmatales</taxon>
        <taxon>Mesostigmataceae</taxon>
        <taxon>Mesostigma</taxon>
    </lineage>
</organism>
<evidence type="ECO:0000255" key="1">
    <source>
        <dbReference type="HAMAP-Rule" id="MF_01394"/>
    </source>
</evidence>
<proteinExistence type="inferred from homology"/>
<geneLocation type="chloroplast"/>